<reference key="1">
    <citation type="submission" date="2008-10" db="EMBL/GenBank/DDBJ databases">
        <title>The complete genome sequence of Helicobacter pylori strain P12.</title>
        <authorList>
            <person name="Fischer W."/>
            <person name="Windhager L."/>
            <person name="Karnholz A."/>
            <person name="Zeiller M."/>
            <person name="Zimmer R."/>
            <person name="Haas R."/>
        </authorList>
    </citation>
    <scope>NUCLEOTIDE SEQUENCE [LARGE SCALE GENOMIC DNA]</scope>
    <source>
        <strain>P12</strain>
    </source>
</reference>
<comment type="function">
    <text evidence="1">Single strand-specific metallo-endoribonuclease involved in late-stage 70S ribosome quality control and in maturation of the 3' terminus of the 16S rRNA.</text>
</comment>
<comment type="cofactor">
    <cofactor evidence="1">
        <name>Zn(2+)</name>
        <dbReference type="ChEBI" id="CHEBI:29105"/>
    </cofactor>
    <text evidence="1">Binds 1 zinc ion.</text>
</comment>
<comment type="subcellular location">
    <subcellularLocation>
        <location evidence="1">Cytoplasm</location>
    </subcellularLocation>
</comment>
<comment type="similarity">
    <text evidence="1">Belongs to the endoribonuclease YbeY family.</text>
</comment>
<proteinExistence type="inferred from homology"/>
<keyword id="KW-0963">Cytoplasm</keyword>
<keyword id="KW-0255">Endonuclease</keyword>
<keyword id="KW-0378">Hydrolase</keyword>
<keyword id="KW-0479">Metal-binding</keyword>
<keyword id="KW-0540">Nuclease</keyword>
<keyword id="KW-0690">Ribosome biogenesis</keyword>
<keyword id="KW-0698">rRNA processing</keyword>
<keyword id="KW-0862">Zinc</keyword>
<sequence>MLEIDNQTPLESDFLLLEKIANVLAPTQIIELILVSGETMREINRDLRGCDYATDVLSFPLEAIPHTPLGSVVINVPLAQENALKLGHSLENEIALLFIHGVLHLLGYDHEKDKGEQRQKEGELIKAFNLPLSLIERTQD</sequence>
<accession>B6JN00</accession>
<name>YBEY_HELP2</name>
<evidence type="ECO:0000255" key="1">
    <source>
        <dbReference type="HAMAP-Rule" id="MF_00009"/>
    </source>
</evidence>
<organism>
    <name type="scientific">Helicobacter pylori (strain P12)</name>
    <dbReference type="NCBI Taxonomy" id="570508"/>
    <lineage>
        <taxon>Bacteria</taxon>
        <taxon>Pseudomonadati</taxon>
        <taxon>Campylobacterota</taxon>
        <taxon>Epsilonproteobacteria</taxon>
        <taxon>Campylobacterales</taxon>
        <taxon>Helicobacteraceae</taxon>
        <taxon>Helicobacter</taxon>
    </lineage>
</organism>
<dbReference type="EC" id="3.1.-.-" evidence="1"/>
<dbReference type="EMBL" id="CP001217">
    <property type="protein sequence ID" value="ACJ08278.1"/>
    <property type="molecule type" value="Genomic_DNA"/>
</dbReference>
<dbReference type="SMR" id="B6JN00"/>
<dbReference type="KEGG" id="hpp:HPP12_1126"/>
<dbReference type="HOGENOM" id="CLU_106710_3_0_7"/>
<dbReference type="Proteomes" id="UP000008198">
    <property type="component" value="Chromosome"/>
</dbReference>
<dbReference type="GO" id="GO:0005737">
    <property type="term" value="C:cytoplasm"/>
    <property type="evidence" value="ECO:0007669"/>
    <property type="project" value="UniProtKB-SubCell"/>
</dbReference>
<dbReference type="GO" id="GO:0004222">
    <property type="term" value="F:metalloendopeptidase activity"/>
    <property type="evidence" value="ECO:0007669"/>
    <property type="project" value="InterPro"/>
</dbReference>
<dbReference type="GO" id="GO:0004521">
    <property type="term" value="F:RNA endonuclease activity"/>
    <property type="evidence" value="ECO:0007669"/>
    <property type="project" value="UniProtKB-UniRule"/>
</dbReference>
<dbReference type="GO" id="GO:0008270">
    <property type="term" value="F:zinc ion binding"/>
    <property type="evidence" value="ECO:0007669"/>
    <property type="project" value="UniProtKB-UniRule"/>
</dbReference>
<dbReference type="GO" id="GO:0006364">
    <property type="term" value="P:rRNA processing"/>
    <property type="evidence" value="ECO:0007669"/>
    <property type="project" value="UniProtKB-UniRule"/>
</dbReference>
<dbReference type="Gene3D" id="3.40.390.30">
    <property type="entry name" value="Metalloproteases ('zincins'), catalytic domain"/>
    <property type="match status" value="1"/>
</dbReference>
<dbReference type="HAMAP" id="MF_00009">
    <property type="entry name" value="Endoribonucl_YbeY"/>
    <property type="match status" value="1"/>
</dbReference>
<dbReference type="InterPro" id="IPR023091">
    <property type="entry name" value="MetalPrtase_cat_dom_sf_prd"/>
</dbReference>
<dbReference type="InterPro" id="IPR002036">
    <property type="entry name" value="YbeY"/>
</dbReference>
<dbReference type="InterPro" id="IPR020549">
    <property type="entry name" value="YbeY_CS"/>
</dbReference>
<dbReference type="NCBIfam" id="TIGR00043">
    <property type="entry name" value="rRNA maturation RNase YbeY"/>
    <property type="match status" value="1"/>
</dbReference>
<dbReference type="PANTHER" id="PTHR46986">
    <property type="entry name" value="ENDORIBONUCLEASE YBEY, CHLOROPLASTIC"/>
    <property type="match status" value="1"/>
</dbReference>
<dbReference type="PANTHER" id="PTHR46986:SF1">
    <property type="entry name" value="ENDORIBONUCLEASE YBEY, CHLOROPLASTIC"/>
    <property type="match status" value="1"/>
</dbReference>
<dbReference type="Pfam" id="PF02130">
    <property type="entry name" value="YbeY"/>
    <property type="match status" value="1"/>
</dbReference>
<dbReference type="SUPFAM" id="SSF55486">
    <property type="entry name" value="Metalloproteases ('zincins'), catalytic domain"/>
    <property type="match status" value="1"/>
</dbReference>
<dbReference type="PROSITE" id="PS01306">
    <property type="entry name" value="UPF0054"/>
    <property type="match status" value="1"/>
</dbReference>
<protein>
    <recommendedName>
        <fullName evidence="1">Endoribonuclease YbeY</fullName>
        <ecNumber evidence="1">3.1.-.-</ecNumber>
    </recommendedName>
</protein>
<gene>
    <name evidence="1" type="primary">ybeY</name>
    <name type="ordered locus">HPP12_1126</name>
</gene>
<feature type="chain" id="PRO_1000089182" description="Endoribonuclease YbeY">
    <location>
        <begin position="1"/>
        <end position="140"/>
    </location>
</feature>
<feature type="binding site" evidence="1">
    <location>
        <position position="100"/>
    </location>
    <ligand>
        <name>Zn(2+)</name>
        <dbReference type="ChEBI" id="CHEBI:29105"/>
        <note>catalytic</note>
    </ligand>
</feature>
<feature type="binding site" evidence="1">
    <location>
        <position position="104"/>
    </location>
    <ligand>
        <name>Zn(2+)</name>
        <dbReference type="ChEBI" id="CHEBI:29105"/>
        <note>catalytic</note>
    </ligand>
</feature>
<feature type="binding site" evidence="1">
    <location>
        <position position="110"/>
    </location>
    <ligand>
        <name>Zn(2+)</name>
        <dbReference type="ChEBI" id="CHEBI:29105"/>
        <note>catalytic</note>
    </ligand>
</feature>